<feature type="chain" id="PRO_1000203630" description="Probable thymidylate kinase">
    <location>
        <begin position="1"/>
        <end position="208"/>
    </location>
</feature>
<feature type="binding site" evidence="1">
    <location>
        <begin position="9"/>
        <end position="16"/>
    </location>
    <ligand>
        <name>ATP</name>
        <dbReference type="ChEBI" id="CHEBI:30616"/>
    </ligand>
</feature>
<gene>
    <name evidence="1" type="primary">tmk</name>
    <name type="ordered locus">TGAM_1769</name>
</gene>
<name>KTHY_THEGJ</name>
<dbReference type="EC" id="2.7.4.9" evidence="1"/>
<dbReference type="EMBL" id="CP001398">
    <property type="protein sequence ID" value="ACS34271.1"/>
    <property type="molecule type" value="Genomic_DNA"/>
</dbReference>
<dbReference type="RefSeq" id="WP_015859380.1">
    <property type="nucleotide sequence ID" value="NC_012804.1"/>
</dbReference>
<dbReference type="SMR" id="C5A1K2"/>
<dbReference type="STRING" id="593117.TGAM_1769"/>
<dbReference type="PaxDb" id="593117-TGAM_1769"/>
<dbReference type="GeneID" id="7987151"/>
<dbReference type="KEGG" id="tga:TGAM_1769"/>
<dbReference type="PATRIC" id="fig|593117.10.peg.1777"/>
<dbReference type="eggNOG" id="arCOG01891">
    <property type="taxonomic scope" value="Archaea"/>
</dbReference>
<dbReference type="HOGENOM" id="CLU_049131_1_3_2"/>
<dbReference type="OrthoDB" id="43083at2157"/>
<dbReference type="Proteomes" id="UP000001488">
    <property type="component" value="Chromosome"/>
</dbReference>
<dbReference type="GO" id="GO:0005737">
    <property type="term" value="C:cytoplasm"/>
    <property type="evidence" value="ECO:0007669"/>
    <property type="project" value="TreeGrafter"/>
</dbReference>
<dbReference type="GO" id="GO:0005524">
    <property type="term" value="F:ATP binding"/>
    <property type="evidence" value="ECO:0007669"/>
    <property type="project" value="UniProtKB-UniRule"/>
</dbReference>
<dbReference type="GO" id="GO:0004798">
    <property type="term" value="F:dTMP kinase activity"/>
    <property type="evidence" value="ECO:0007669"/>
    <property type="project" value="UniProtKB-UniRule"/>
</dbReference>
<dbReference type="GO" id="GO:0006233">
    <property type="term" value="P:dTDP biosynthetic process"/>
    <property type="evidence" value="ECO:0007669"/>
    <property type="project" value="InterPro"/>
</dbReference>
<dbReference type="GO" id="GO:0006235">
    <property type="term" value="P:dTTP biosynthetic process"/>
    <property type="evidence" value="ECO:0007669"/>
    <property type="project" value="UniProtKB-UniRule"/>
</dbReference>
<dbReference type="GO" id="GO:0006227">
    <property type="term" value="P:dUDP biosynthetic process"/>
    <property type="evidence" value="ECO:0007669"/>
    <property type="project" value="TreeGrafter"/>
</dbReference>
<dbReference type="CDD" id="cd01672">
    <property type="entry name" value="TMPK"/>
    <property type="match status" value="1"/>
</dbReference>
<dbReference type="FunFam" id="3.40.50.300:FF:000225">
    <property type="entry name" value="Thymidylate kinase"/>
    <property type="match status" value="1"/>
</dbReference>
<dbReference type="Gene3D" id="3.40.50.300">
    <property type="entry name" value="P-loop containing nucleotide triphosphate hydrolases"/>
    <property type="match status" value="1"/>
</dbReference>
<dbReference type="HAMAP" id="MF_00165">
    <property type="entry name" value="Thymidylate_kinase"/>
    <property type="match status" value="1"/>
</dbReference>
<dbReference type="InterPro" id="IPR027417">
    <property type="entry name" value="P-loop_NTPase"/>
</dbReference>
<dbReference type="InterPro" id="IPR039430">
    <property type="entry name" value="Thymidylate_kin-like_dom"/>
</dbReference>
<dbReference type="InterPro" id="IPR018095">
    <property type="entry name" value="Thymidylate_kin_CS"/>
</dbReference>
<dbReference type="InterPro" id="IPR018094">
    <property type="entry name" value="Thymidylate_kinase"/>
</dbReference>
<dbReference type="NCBIfam" id="TIGR00041">
    <property type="entry name" value="DTMP_kinase"/>
    <property type="match status" value="1"/>
</dbReference>
<dbReference type="PANTHER" id="PTHR10344">
    <property type="entry name" value="THYMIDYLATE KINASE"/>
    <property type="match status" value="1"/>
</dbReference>
<dbReference type="PANTHER" id="PTHR10344:SF4">
    <property type="entry name" value="UMP-CMP KINASE 2, MITOCHONDRIAL"/>
    <property type="match status" value="1"/>
</dbReference>
<dbReference type="Pfam" id="PF02223">
    <property type="entry name" value="Thymidylate_kin"/>
    <property type="match status" value="1"/>
</dbReference>
<dbReference type="SUPFAM" id="SSF52540">
    <property type="entry name" value="P-loop containing nucleoside triphosphate hydrolases"/>
    <property type="match status" value="1"/>
</dbReference>
<dbReference type="PROSITE" id="PS01331">
    <property type="entry name" value="THYMIDYLATE_KINASE"/>
    <property type="match status" value="1"/>
</dbReference>
<sequence>MGIFVVIEGIDGAGKSTQAKLLAKWFEKKGYEVILTKEPTDTAFGKLIRKLVLTGGREGIIDGARISHEAEALLFAADRAEHVHKLIKPALESGKVVISDRYFYSSLAYQWARGLDLQWLIDLNRFAVRPDLVVLLDLPVKESMRRINGRSIKTEFDKIVELQKRVRENYLKLAEMFPEIRIVNAQNSIEDIHRDIVGLVEQEILSGI</sequence>
<evidence type="ECO:0000255" key="1">
    <source>
        <dbReference type="HAMAP-Rule" id="MF_00165"/>
    </source>
</evidence>
<comment type="catalytic activity">
    <reaction evidence="1">
        <text>dTMP + ATP = dTDP + ADP</text>
        <dbReference type="Rhea" id="RHEA:13517"/>
        <dbReference type="ChEBI" id="CHEBI:30616"/>
        <dbReference type="ChEBI" id="CHEBI:58369"/>
        <dbReference type="ChEBI" id="CHEBI:63528"/>
        <dbReference type="ChEBI" id="CHEBI:456216"/>
        <dbReference type="EC" id="2.7.4.9"/>
    </reaction>
</comment>
<comment type="similarity">
    <text evidence="1">Belongs to the thymidylate kinase family.</text>
</comment>
<accession>C5A1K2</accession>
<keyword id="KW-0067">ATP-binding</keyword>
<keyword id="KW-0418">Kinase</keyword>
<keyword id="KW-0545">Nucleotide biosynthesis</keyword>
<keyword id="KW-0547">Nucleotide-binding</keyword>
<keyword id="KW-1185">Reference proteome</keyword>
<keyword id="KW-0808">Transferase</keyword>
<protein>
    <recommendedName>
        <fullName evidence="1">Probable thymidylate kinase</fullName>
        <ecNumber evidence="1">2.7.4.9</ecNumber>
    </recommendedName>
    <alternativeName>
        <fullName evidence="1">dTMP kinase</fullName>
    </alternativeName>
</protein>
<reference key="1">
    <citation type="journal article" date="2007" name="Genome Biol.">
        <title>Genome analysis and genome-wide proteomics of Thermococcus gammatolerans, the most radioresistant organism known amongst the Archaea.</title>
        <authorList>
            <person name="Zivanovic Y."/>
            <person name="Armengaud J."/>
            <person name="Lagorce A."/>
            <person name="Leplat C."/>
            <person name="Guerin P."/>
            <person name="Dutertre M."/>
            <person name="Anthouard V."/>
            <person name="Forterre P."/>
            <person name="Wincker P."/>
            <person name="Confalonieri F."/>
        </authorList>
    </citation>
    <scope>NUCLEOTIDE SEQUENCE [LARGE SCALE GENOMIC DNA]</scope>
    <source>
        <strain>DSM 15229 / JCM 11827 / EJ3</strain>
    </source>
</reference>
<organism>
    <name type="scientific">Thermococcus gammatolerans (strain DSM 15229 / JCM 11827 / EJ3)</name>
    <dbReference type="NCBI Taxonomy" id="593117"/>
    <lineage>
        <taxon>Archaea</taxon>
        <taxon>Methanobacteriati</taxon>
        <taxon>Methanobacteriota</taxon>
        <taxon>Thermococci</taxon>
        <taxon>Thermococcales</taxon>
        <taxon>Thermococcaceae</taxon>
        <taxon>Thermococcus</taxon>
    </lineage>
</organism>
<proteinExistence type="inferred from homology"/>